<sequence>MAIKIYRPTSPGRRHHSVSSFEEITKSRPEKALLVSVKNDSGRNNQGRVTVRHRGGGSKTQIRVIDFKRNKLDVPGRIAAIEYDPNRTARIALVFYTDGEKRYILAPSDLKIGDVIMAGENAEPKSGNALPLSAIPTGTFIHNIELIKGRGGIMVRSAGAAAQLMAKEGDYALVRLPSGEMRKVRSDCSATVGQIGNIEHGTLEIGKAGRNRHLGWRPTVRGSAMSPNNHPHGGGECRSPIGMTGPKTPWGKPALGYRTRKAKYSDKLIVKRRG</sequence>
<feature type="chain" id="PRO_0000237177" description="Large ribosomal subunit protein uL2">
    <location>
        <begin position="1"/>
        <end position="274"/>
    </location>
</feature>
<feature type="region of interest" description="Disordered" evidence="2">
    <location>
        <begin position="1"/>
        <end position="23"/>
    </location>
</feature>
<feature type="region of interest" description="Disordered" evidence="2">
    <location>
        <begin position="222"/>
        <end position="242"/>
    </location>
</feature>
<protein>
    <recommendedName>
        <fullName evidence="1">Large ribosomal subunit protein uL2</fullName>
    </recommendedName>
    <alternativeName>
        <fullName evidence="3">50S ribosomal protein L2</fullName>
    </alternativeName>
</protein>
<accession>Q3Z978</accession>
<proteinExistence type="inferred from homology"/>
<gene>
    <name evidence="1" type="primary">rplB</name>
    <name type="ordered locus">DET0477</name>
</gene>
<organism>
    <name type="scientific">Dehalococcoides mccartyi (strain ATCC BAA-2266 / KCTC 15142 / 195)</name>
    <name type="common">Dehalococcoides ethenogenes (strain 195)</name>
    <dbReference type="NCBI Taxonomy" id="243164"/>
    <lineage>
        <taxon>Bacteria</taxon>
        <taxon>Bacillati</taxon>
        <taxon>Chloroflexota</taxon>
        <taxon>Dehalococcoidia</taxon>
        <taxon>Dehalococcoidales</taxon>
        <taxon>Dehalococcoidaceae</taxon>
        <taxon>Dehalococcoides</taxon>
    </lineage>
</organism>
<name>RL2_DEHM1</name>
<evidence type="ECO:0000255" key="1">
    <source>
        <dbReference type="HAMAP-Rule" id="MF_01320"/>
    </source>
</evidence>
<evidence type="ECO:0000256" key="2">
    <source>
        <dbReference type="SAM" id="MobiDB-lite"/>
    </source>
</evidence>
<evidence type="ECO:0000305" key="3"/>
<dbReference type="EMBL" id="CP000027">
    <property type="protein sequence ID" value="AAW40188.1"/>
    <property type="molecule type" value="Genomic_DNA"/>
</dbReference>
<dbReference type="RefSeq" id="WP_010936254.1">
    <property type="nucleotide sequence ID" value="NC_002936.3"/>
</dbReference>
<dbReference type="SMR" id="Q3Z978"/>
<dbReference type="FunCoup" id="Q3Z978">
    <property type="interactions" value="338"/>
</dbReference>
<dbReference type="STRING" id="243164.DET0477"/>
<dbReference type="GeneID" id="3230152"/>
<dbReference type="KEGG" id="det:DET0477"/>
<dbReference type="eggNOG" id="COG0090">
    <property type="taxonomic scope" value="Bacteria"/>
</dbReference>
<dbReference type="HOGENOM" id="CLU_036235_2_1_0"/>
<dbReference type="InParanoid" id="Q3Z978"/>
<dbReference type="Proteomes" id="UP000008289">
    <property type="component" value="Chromosome"/>
</dbReference>
<dbReference type="GO" id="GO:0015934">
    <property type="term" value="C:large ribosomal subunit"/>
    <property type="evidence" value="ECO:0007669"/>
    <property type="project" value="InterPro"/>
</dbReference>
<dbReference type="GO" id="GO:0019843">
    <property type="term" value="F:rRNA binding"/>
    <property type="evidence" value="ECO:0007669"/>
    <property type="project" value="UniProtKB-UniRule"/>
</dbReference>
<dbReference type="GO" id="GO:0003735">
    <property type="term" value="F:structural constituent of ribosome"/>
    <property type="evidence" value="ECO:0007669"/>
    <property type="project" value="InterPro"/>
</dbReference>
<dbReference type="GO" id="GO:0016740">
    <property type="term" value="F:transferase activity"/>
    <property type="evidence" value="ECO:0007669"/>
    <property type="project" value="InterPro"/>
</dbReference>
<dbReference type="GO" id="GO:0002181">
    <property type="term" value="P:cytoplasmic translation"/>
    <property type="evidence" value="ECO:0007669"/>
    <property type="project" value="TreeGrafter"/>
</dbReference>
<dbReference type="FunFam" id="2.30.30.30:FF:000001">
    <property type="entry name" value="50S ribosomal protein L2"/>
    <property type="match status" value="1"/>
</dbReference>
<dbReference type="FunFam" id="2.40.50.140:FF:000003">
    <property type="entry name" value="50S ribosomal protein L2"/>
    <property type="match status" value="1"/>
</dbReference>
<dbReference type="FunFam" id="4.10.950.10:FF:000001">
    <property type="entry name" value="50S ribosomal protein L2"/>
    <property type="match status" value="1"/>
</dbReference>
<dbReference type="Gene3D" id="2.30.30.30">
    <property type="match status" value="1"/>
</dbReference>
<dbReference type="Gene3D" id="2.40.50.140">
    <property type="entry name" value="Nucleic acid-binding proteins"/>
    <property type="match status" value="1"/>
</dbReference>
<dbReference type="Gene3D" id="4.10.950.10">
    <property type="entry name" value="Ribosomal protein L2, domain 3"/>
    <property type="match status" value="1"/>
</dbReference>
<dbReference type="HAMAP" id="MF_01320_B">
    <property type="entry name" value="Ribosomal_uL2_B"/>
    <property type="match status" value="1"/>
</dbReference>
<dbReference type="InterPro" id="IPR012340">
    <property type="entry name" value="NA-bd_OB-fold"/>
</dbReference>
<dbReference type="InterPro" id="IPR014722">
    <property type="entry name" value="Rib_uL2_dom2"/>
</dbReference>
<dbReference type="InterPro" id="IPR002171">
    <property type="entry name" value="Ribosomal_uL2"/>
</dbReference>
<dbReference type="InterPro" id="IPR005880">
    <property type="entry name" value="Ribosomal_uL2_bac/org-type"/>
</dbReference>
<dbReference type="InterPro" id="IPR022669">
    <property type="entry name" value="Ribosomal_uL2_C"/>
</dbReference>
<dbReference type="InterPro" id="IPR014726">
    <property type="entry name" value="Ribosomal_uL2_dom3"/>
</dbReference>
<dbReference type="InterPro" id="IPR022666">
    <property type="entry name" value="Ribosomal_uL2_RNA-bd_dom"/>
</dbReference>
<dbReference type="InterPro" id="IPR008991">
    <property type="entry name" value="Translation_prot_SH3-like_sf"/>
</dbReference>
<dbReference type="NCBIfam" id="TIGR01171">
    <property type="entry name" value="rplB_bact"/>
    <property type="match status" value="1"/>
</dbReference>
<dbReference type="PANTHER" id="PTHR13691:SF5">
    <property type="entry name" value="LARGE RIBOSOMAL SUBUNIT PROTEIN UL2M"/>
    <property type="match status" value="1"/>
</dbReference>
<dbReference type="PANTHER" id="PTHR13691">
    <property type="entry name" value="RIBOSOMAL PROTEIN L2"/>
    <property type="match status" value="1"/>
</dbReference>
<dbReference type="Pfam" id="PF00181">
    <property type="entry name" value="Ribosomal_L2"/>
    <property type="match status" value="1"/>
</dbReference>
<dbReference type="Pfam" id="PF03947">
    <property type="entry name" value="Ribosomal_L2_C"/>
    <property type="match status" value="1"/>
</dbReference>
<dbReference type="PIRSF" id="PIRSF002158">
    <property type="entry name" value="Ribosomal_L2"/>
    <property type="match status" value="1"/>
</dbReference>
<dbReference type="SMART" id="SM01383">
    <property type="entry name" value="Ribosomal_L2"/>
    <property type="match status" value="1"/>
</dbReference>
<dbReference type="SMART" id="SM01382">
    <property type="entry name" value="Ribosomal_L2_C"/>
    <property type="match status" value="1"/>
</dbReference>
<dbReference type="SUPFAM" id="SSF50249">
    <property type="entry name" value="Nucleic acid-binding proteins"/>
    <property type="match status" value="1"/>
</dbReference>
<dbReference type="SUPFAM" id="SSF50104">
    <property type="entry name" value="Translation proteins SH3-like domain"/>
    <property type="match status" value="1"/>
</dbReference>
<reference key="1">
    <citation type="journal article" date="2005" name="Science">
        <title>Genome sequence of the PCE-dechlorinating bacterium Dehalococcoides ethenogenes.</title>
        <authorList>
            <person name="Seshadri R."/>
            <person name="Adrian L."/>
            <person name="Fouts D.E."/>
            <person name="Eisen J.A."/>
            <person name="Phillippy A.M."/>
            <person name="Methe B.A."/>
            <person name="Ward N.L."/>
            <person name="Nelson W.C."/>
            <person name="DeBoy R.T."/>
            <person name="Khouri H.M."/>
            <person name="Kolonay J.F."/>
            <person name="Dodson R.J."/>
            <person name="Daugherty S.C."/>
            <person name="Brinkac L.M."/>
            <person name="Sullivan S.A."/>
            <person name="Madupu R."/>
            <person name="Nelson K.E."/>
            <person name="Kang K.H."/>
            <person name="Impraim M."/>
            <person name="Tran K."/>
            <person name="Robinson J.M."/>
            <person name="Forberger H.A."/>
            <person name="Fraser C.M."/>
            <person name="Zinder S.H."/>
            <person name="Heidelberg J.F."/>
        </authorList>
    </citation>
    <scope>NUCLEOTIDE SEQUENCE [LARGE SCALE GENOMIC DNA]</scope>
    <source>
        <strain>ATCC BAA-2266 / KCTC 15142 / 195</strain>
    </source>
</reference>
<comment type="function">
    <text evidence="1">One of the primary rRNA binding proteins. Required for association of the 30S and 50S subunits to form the 70S ribosome, for tRNA binding and peptide bond formation. It has been suggested to have peptidyltransferase activity; this is somewhat controversial. Makes several contacts with the 16S rRNA in the 70S ribosome.</text>
</comment>
<comment type="subunit">
    <text evidence="1">Part of the 50S ribosomal subunit. Forms a bridge to the 30S subunit in the 70S ribosome.</text>
</comment>
<comment type="similarity">
    <text evidence="1">Belongs to the universal ribosomal protein uL2 family.</text>
</comment>
<keyword id="KW-0687">Ribonucleoprotein</keyword>
<keyword id="KW-0689">Ribosomal protein</keyword>
<keyword id="KW-0694">RNA-binding</keyword>
<keyword id="KW-0699">rRNA-binding</keyword>